<evidence type="ECO:0000250" key="1">
    <source>
        <dbReference type="UniProtKB" id="P78363"/>
    </source>
</evidence>
<evidence type="ECO:0000255" key="2"/>
<evidence type="ECO:0000255" key="3">
    <source>
        <dbReference type="PROSITE-ProRule" id="PRU00434"/>
    </source>
</evidence>
<evidence type="ECO:0000255" key="4">
    <source>
        <dbReference type="PROSITE-ProRule" id="PRU00498"/>
    </source>
</evidence>
<evidence type="ECO:0000256" key="5">
    <source>
        <dbReference type="SAM" id="MobiDB-lite"/>
    </source>
</evidence>
<evidence type="ECO:0000269" key="6">
    <source>
    </source>
</evidence>
<evidence type="ECO:0000269" key="7">
    <source>
    </source>
</evidence>
<evidence type="ECO:0000269" key="8">
    <source>
    </source>
</evidence>
<evidence type="ECO:0000269" key="9">
    <source>
    </source>
</evidence>
<evidence type="ECO:0000269" key="10">
    <source>
    </source>
</evidence>
<evidence type="ECO:0000269" key="11">
    <source>
    </source>
</evidence>
<evidence type="ECO:0000269" key="12">
    <source>
    </source>
</evidence>
<evidence type="ECO:0000269" key="13">
    <source>
    </source>
</evidence>
<evidence type="ECO:0000269" key="14">
    <source>
    </source>
</evidence>
<evidence type="ECO:0000269" key="15">
    <source>
    </source>
</evidence>
<evidence type="ECO:0000269" key="16">
    <source>
    </source>
</evidence>
<evidence type="ECO:0000303" key="17">
    <source>
    </source>
</evidence>
<evidence type="ECO:0000303" key="18">
    <source>
    </source>
</evidence>
<evidence type="ECO:0000305" key="19"/>
<evidence type="ECO:0000305" key="20">
    <source>
    </source>
</evidence>
<evidence type="ECO:0000305" key="21">
    <source>
    </source>
</evidence>
<proteinExistence type="evidence at protein level"/>
<keyword id="KW-0067">ATP-binding</keyword>
<keyword id="KW-0966">Cell projection</keyword>
<keyword id="KW-0968">Cytoplasmic vesicle</keyword>
<keyword id="KW-0903">Direct protein sequencing</keyword>
<keyword id="KW-1015">Disulfide bond</keyword>
<keyword id="KW-0256">Endoplasmic reticulum</keyword>
<keyword id="KW-0325">Glycoprotein</keyword>
<keyword id="KW-0378">Hydrolase</keyword>
<keyword id="KW-0460">Magnesium</keyword>
<keyword id="KW-0472">Membrane</keyword>
<keyword id="KW-0479">Metal-binding</keyword>
<keyword id="KW-0547">Nucleotide-binding</keyword>
<keyword id="KW-0597">Phosphoprotein</keyword>
<keyword id="KW-1185">Reference proteome</keyword>
<keyword id="KW-1278">Translocase</keyword>
<keyword id="KW-0812">Transmembrane</keyword>
<keyword id="KW-1133">Transmembrane helix</keyword>
<dbReference type="EC" id="7.6.2.1" evidence="1"/>
<dbReference type="EMBL" id="U90126">
    <property type="protein sequence ID" value="AAC48716.1"/>
    <property type="molecule type" value="mRNA"/>
</dbReference>
<dbReference type="EMBL" id="DAAA02007872">
    <property type="status" value="NOT_ANNOTATED_CDS"/>
    <property type="molecule type" value="Genomic_DNA"/>
</dbReference>
<dbReference type="RefSeq" id="NP_776646.1">
    <property type="nucleotide sequence ID" value="NM_174221.2"/>
</dbReference>
<dbReference type="SMR" id="F1MWM0"/>
<dbReference type="FunCoup" id="F1MWM0">
    <property type="interactions" value="320"/>
</dbReference>
<dbReference type="IntAct" id="F1MWM0">
    <property type="interactions" value="1"/>
</dbReference>
<dbReference type="MINT" id="F1MWM0"/>
<dbReference type="STRING" id="9913.ENSBTAP00000023982"/>
<dbReference type="GlyConnect" id="812">
    <property type="glycosylation" value="12 N-Linked glycans (6 sites)"/>
</dbReference>
<dbReference type="GlyCosmos" id="F1MWM0">
    <property type="glycosylation" value="12 sites, 11 glycans"/>
</dbReference>
<dbReference type="GlyGen" id="F1MWM0">
    <property type="glycosylation" value="12 sites, 11 N-linked glycans (6 sites)"/>
</dbReference>
<dbReference type="iPTMnet" id="F1MWM0"/>
<dbReference type="PaxDb" id="9913-ENSBTAP00000023982"/>
<dbReference type="Ensembl" id="ENSBTAT00000023982.6">
    <property type="protein sequence ID" value="ENSBTAP00000023982.5"/>
    <property type="gene ID" value="ENSBTAG00000018010.7"/>
</dbReference>
<dbReference type="GeneID" id="281584"/>
<dbReference type="KEGG" id="bta:281584"/>
<dbReference type="CTD" id="24"/>
<dbReference type="VEuPathDB" id="HostDB:ENSBTAG00000018010"/>
<dbReference type="VGNC" id="VGNC:25458">
    <property type="gene designation" value="ABCA4"/>
</dbReference>
<dbReference type="eggNOG" id="KOG0059">
    <property type="taxonomic scope" value="Eukaryota"/>
</dbReference>
<dbReference type="GeneTree" id="ENSGT00940000155624"/>
<dbReference type="HOGENOM" id="CLU_000604_19_0_1"/>
<dbReference type="InParanoid" id="F1MWM0"/>
<dbReference type="OMA" id="FMWNVIA"/>
<dbReference type="OrthoDB" id="10255969at2759"/>
<dbReference type="TreeFam" id="TF105191"/>
<dbReference type="Reactome" id="R-BTA-2453902">
    <property type="pathway name" value="The canonical retinoid cycle in rods (twilight vision)"/>
</dbReference>
<dbReference type="Reactome" id="R-BTA-382556">
    <property type="pathway name" value="ABC-family proteins mediated transport"/>
</dbReference>
<dbReference type="Proteomes" id="UP000009136">
    <property type="component" value="Chromosome 3"/>
</dbReference>
<dbReference type="Bgee" id="ENSBTAG00000018010">
    <property type="expression patterns" value="Expressed in retina and 16 other cell types or tissues"/>
</dbReference>
<dbReference type="GO" id="GO:0005783">
    <property type="term" value="C:endoplasmic reticulum"/>
    <property type="evidence" value="ECO:0007669"/>
    <property type="project" value="UniProtKB-SubCell"/>
</dbReference>
<dbReference type="GO" id="GO:0043231">
    <property type="term" value="C:intracellular membrane-bounded organelle"/>
    <property type="evidence" value="ECO:0000318"/>
    <property type="project" value="GO_Central"/>
</dbReference>
<dbReference type="GO" id="GO:0097381">
    <property type="term" value="C:photoreceptor disc membrane"/>
    <property type="evidence" value="ECO:0000304"/>
    <property type="project" value="Reactome"/>
</dbReference>
<dbReference type="GO" id="GO:0001750">
    <property type="term" value="C:photoreceptor outer segment"/>
    <property type="evidence" value="ECO:0000314"/>
    <property type="project" value="UniProtKB"/>
</dbReference>
<dbReference type="GO" id="GO:0005886">
    <property type="term" value="C:plasma membrane"/>
    <property type="evidence" value="ECO:0007669"/>
    <property type="project" value="InterPro"/>
</dbReference>
<dbReference type="GO" id="GO:0120202">
    <property type="term" value="C:rod photoreceptor disc membrane"/>
    <property type="evidence" value="ECO:0000314"/>
    <property type="project" value="UniProtKB"/>
</dbReference>
<dbReference type="GO" id="GO:0005502">
    <property type="term" value="F:11-cis retinal binding"/>
    <property type="evidence" value="ECO:0000250"/>
    <property type="project" value="UniProtKB"/>
</dbReference>
<dbReference type="GO" id="GO:0140359">
    <property type="term" value="F:ABC-type transporter activity"/>
    <property type="evidence" value="ECO:0007669"/>
    <property type="project" value="InterPro"/>
</dbReference>
<dbReference type="GO" id="GO:0005503">
    <property type="term" value="F:all-trans retinal binding"/>
    <property type="evidence" value="ECO:0000250"/>
    <property type="project" value="UniProtKB"/>
</dbReference>
<dbReference type="GO" id="GO:0005524">
    <property type="term" value="F:ATP binding"/>
    <property type="evidence" value="ECO:0000314"/>
    <property type="project" value="UniProtKB"/>
</dbReference>
<dbReference type="GO" id="GO:0016887">
    <property type="term" value="F:ATP hydrolysis activity"/>
    <property type="evidence" value="ECO:0000314"/>
    <property type="project" value="UniProtKB"/>
</dbReference>
<dbReference type="GO" id="GO:0140326">
    <property type="term" value="F:ATPase-coupled intramembrane lipid transporter activity"/>
    <property type="evidence" value="ECO:0000318"/>
    <property type="project" value="GO_Central"/>
</dbReference>
<dbReference type="GO" id="GO:0042626">
    <property type="term" value="F:ATPase-coupled transmembrane transporter activity"/>
    <property type="evidence" value="ECO:0000318"/>
    <property type="project" value="GO_Central"/>
</dbReference>
<dbReference type="GO" id="GO:0005525">
    <property type="term" value="F:GTP binding"/>
    <property type="evidence" value="ECO:0000314"/>
    <property type="project" value="UniProtKB"/>
</dbReference>
<dbReference type="GO" id="GO:0003924">
    <property type="term" value="F:GTPase activity"/>
    <property type="evidence" value="ECO:0000314"/>
    <property type="project" value="UniProtKB"/>
</dbReference>
<dbReference type="GO" id="GO:0140347">
    <property type="term" value="F:N-retinylidene-phosphatidylethanolamine flippase activity"/>
    <property type="evidence" value="ECO:0000314"/>
    <property type="project" value="UniProtKB"/>
</dbReference>
<dbReference type="GO" id="GO:0090555">
    <property type="term" value="F:phosphatidylethanolamine flippase activity"/>
    <property type="evidence" value="ECO:0007669"/>
    <property type="project" value="Ensembl"/>
</dbReference>
<dbReference type="GO" id="GO:0005548">
    <property type="term" value="F:phospholipid transporter activity"/>
    <property type="evidence" value="ECO:0000318"/>
    <property type="project" value="GO_Central"/>
</dbReference>
<dbReference type="GO" id="GO:0005501">
    <property type="term" value="F:retinoid binding"/>
    <property type="evidence" value="ECO:0000314"/>
    <property type="project" value="UniProtKB"/>
</dbReference>
<dbReference type="GO" id="GO:0034632">
    <property type="term" value="F:retinol transmembrane transporter activity"/>
    <property type="evidence" value="ECO:0000304"/>
    <property type="project" value="Reactome"/>
</dbReference>
<dbReference type="GO" id="GO:0006869">
    <property type="term" value="P:lipid transport"/>
    <property type="evidence" value="ECO:0000318"/>
    <property type="project" value="GO_Central"/>
</dbReference>
<dbReference type="GO" id="GO:0006649">
    <property type="term" value="P:phospholipid transfer to membrane"/>
    <property type="evidence" value="ECO:0007669"/>
    <property type="project" value="Ensembl"/>
</dbReference>
<dbReference type="GO" id="GO:0045332">
    <property type="term" value="P:phospholipid translocation"/>
    <property type="evidence" value="ECO:0007669"/>
    <property type="project" value="Ensembl"/>
</dbReference>
<dbReference type="GO" id="GO:0045494">
    <property type="term" value="P:photoreceptor cell maintenance"/>
    <property type="evidence" value="ECO:0007669"/>
    <property type="project" value="Ensembl"/>
</dbReference>
<dbReference type="GO" id="GO:0042574">
    <property type="term" value="P:retinal metabolic process"/>
    <property type="evidence" value="ECO:0000314"/>
    <property type="project" value="UniProtKB"/>
</dbReference>
<dbReference type="GO" id="GO:0001523">
    <property type="term" value="P:retinoid metabolic process"/>
    <property type="evidence" value="ECO:0000314"/>
    <property type="project" value="UniProtKB"/>
</dbReference>
<dbReference type="GO" id="GO:0007601">
    <property type="term" value="P:visual perception"/>
    <property type="evidence" value="ECO:0007669"/>
    <property type="project" value="Ensembl"/>
</dbReference>
<dbReference type="CDD" id="cd03263">
    <property type="entry name" value="ABC_subfamily_A"/>
    <property type="match status" value="2"/>
</dbReference>
<dbReference type="FunFam" id="3.40.50.300:FF:000232">
    <property type="entry name" value="ATP-binding cassette, sub-family A (ABC1), member 1"/>
    <property type="match status" value="1"/>
</dbReference>
<dbReference type="FunFam" id="3.40.50.300:FF:000264">
    <property type="entry name" value="ATP-binding cassette, sub-family A (ABC1), member 1"/>
    <property type="match status" value="1"/>
</dbReference>
<dbReference type="Gene3D" id="3.40.50.300">
    <property type="entry name" value="P-loop containing nucleotide triphosphate hydrolases"/>
    <property type="match status" value="2"/>
</dbReference>
<dbReference type="InterPro" id="IPR003593">
    <property type="entry name" value="AAA+_ATPase"/>
</dbReference>
<dbReference type="InterPro" id="IPR013525">
    <property type="entry name" value="ABC2_TM"/>
</dbReference>
<dbReference type="InterPro" id="IPR003439">
    <property type="entry name" value="ABC_transporter-like_ATP-bd"/>
</dbReference>
<dbReference type="InterPro" id="IPR026082">
    <property type="entry name" value="ABCA"/>
</dbReference>
<dbReference type="InterPro" id="IPR005951">
    <property type="entry name" value="ABCA4/ABCR"/>
</dbReference>
<dbReference type="InterPro" id="IPR027417">
    <property type="entry name" value="P-loop_NTPase"/>
</dbReference>
<dbReference type="InterPro" id="IPR056264">
    <property type="entry name" value="R2_ABCA1-4-like"/>
</dbReference>
<dbReference type="NCBIfam" id="TIGR01257">
    <property type="entry name" value="rim_protein"/>
    <property type="match status" value="1"/>
</dbReference>
<dbReference type="PANTHER" id="PTHR19229:SF250">
    <property type="entry name" value="ABC TRANSPORTER DOMAIN-CONTAINING PROTEIN-RELATED"/>
    <property type="match status" value="1"/>
</dbReference>
<dbReference type="PANTHER" id="PTHR19229">
    <property type="entry name" value="ATP-BINDING CASSETTE TRANSPORTER SUBFAMILY A ABCA"/>
    <property type="match status" value="1"/>
</dbReference>
<dbReference type="Pfam" id="PF12698">
    <property type="entry name" value="ABC2_membrane_3"/>
    <property type="match status" value="2"/>
</dbReference>
<dbReference type="Pfam" id="PF00005">
    <property type="entry name" value="ABC_tran"/>
    <property type="match status" value="2"/>
</dbReference>
<dbReference type="Pfam" id="PF23321">
    <property type="entry name" value="R1_ABCA1"/>
    <property type="match status" value="1"/>
</dbReference>
<dbReference type="SMART" id="SM00382">
    <property type="entry name" value="AAA"/>
    <property type="match status" value="2"/>
</dbReference>
<dbReference type="SUPFAM" id="SSF52540">
    <property type="entry name" value="P-loop containing nucleoside triphosphate hydrolases"/>
    <property type="match status" value="2"/>
</dbReference>
<dbReference type="PROSITE" id="PS50893">
    <property type="entry name" value="ABC_TRANSPORTER_2"/>
    <property type="match status" value="2"/>
</dbReference>
<accession>F1MWM0</accession>
<accession>O02698</accession>
<name>ABCA4_BOVIN</name>
<reference key="1">
    <citation type="journal article" date="1997" name="J. Biol. Chem.">
        <title>The 220-kDa rim protein of retinal rod outer segments is a member of the ABC transporter superfamily.</title>
        <authorList>
            <person name="Illing M."/>
            <person name="Molday L.L."/>
            <person name="Molday R.S."/>
        </authorList>
    </citation>
    <scope>NUCLEOTIDE SEQUENCE [MRNA]</scope>
    <scope>PARTIAL PROTEIN SEQUENCE</scope>
    <scope>SUBCELLULAR LOCATION</scope>
    <scope>GLYCOSYLATION</scope>
    <scope>TISSUE SPECIFICITY</scope>
    <scope>SITE</scope>
    <scope>PROTEOLYTIC CLEAVAGE</scope>
    <source>
        <tissue>Retinal rod cell</tissue>
    </source>
</reference>
<reference key="2">
    <citation type="journal article" date="2009" name="Genome Biol.">
        <title>A whole-genome assembly of the domestic cow, Bos taurus.</title>
        <authorList>
            <person name="Zimin A.V."/>
            <person name="Delcher A.L."/>
            <person name="Florea L."/>
            <person name="Kelley D.R."/>
            <person name="Schatz M.C."/>
            <person name="Puiu D."/>
            <person name="Hanrahan F."/>
            <person name="Pertea G."/>
            <person name="Van Tassell C.P."/>
            <person name="Sonstegard T.S."/>
            <person name="Marcais G."/>
            <person name="Roberts M."/>
            <person name="Subramanian P."/>
            <person name="Yorke J.A."/>
            <person name="Salzberg S.L."/>
        </authorList>
    </citation>
    <scope>NUCLEOTIDE SEQUENCE [LARGE SCALE GENOMIC DNA]</scope>
    <source>
        <strain>Hereford</strain>
    </source>
</reference>
<reference key="3">
    <citation type="journal article" date="1997" name="FEBS Lett.">
        <title>The photoreceptor rim protein is an ABC transporter encoded by the gene for recessive Stargardt's disease (ABCR).</title>
        <authorList>
            <person name="Azarian S.M."/>
            <person name="Travis G.H."/>
        </authorList>
    </citation>
    <scope>PROTEIN SEQUENCE OF 1-16</scope>
    <scope>SUBCELLULAR LOCATION</scope>
    <scope>GLYCOSYLATION</scope>
    <scope>TISSUE SPECIFICITY</scope>
</reference>
<reference key="4">
    <citation type="journal article" date="1997" name="Nat. Genet.">
        <title>Stargardt's ABCR is localized to the disc membrane of retinal rod outer segments.</title>
        <authorList>
            <person name="Sun H."/>
            <person name="Nathans J."/>
        </authorList>
    </citation>
    <scope>SUBCELLULAR LOCATION</scope>
</reference>
<reference key="5">
    <citation type="journal article" date="1999" name="J. Biol. Chem.">
        <title>Retinal stimulates ATP hydrolysis by purified and reconstituted ABCR, the photoreceptor-specific ATP-binding cassette transporter responsible for Stargardt disease.</title>
        <authorList>
            <person name="Sun H."/>
            <person name="Molday R.S."/>
            <person name="Nathans J."/>
        </authorList>
    </citation>
    <scope>FUNCTION</scope>
    <scope>BIOPHYSICOCHEMICAL PROPERTIES</scope>
</reference>
<reference key="6">
    <citation type="journal article" date="2000" name="J. Biol. Chem.">
        <title>The effect of lipid environment and retinoids on the ATPase activity of ABCR, the photoreceptor ABC transporter responsible for Stargardt macular dystrophy.</title>
        <authorList>
            <person name="Ahn J."/>
            <person name="Wong J.T."/>
            <person name="Molday R.S."/>
        </authorList>
    </citation>
    <scope>FUNCTION</scope>
    <scope>BIOPHYSICOCHEMICAL PROPERTIES</scope>
</reference>
<reference key="7">
    <citation type="journal article" date="2001" name="J. Biol. Chem.">
        <title>Membrane topology of the ATP binding cassette transporter ABCR and its relationship to ABC1 and related ABCA transporters: identification of N-linked glycosylation sites.</title>
        <authorList>
            <person name="Bungert S."/>
            <person name="Molday L.L."/>
            <person name="Molday R.S."/>
        </authorList>
    </citation>
    <scope>PROTEOLYTIC CLEAVAGE</scope>
    <scope>GLYCOSYLATION</scope>
</reference>
<reference key="8">
    <citation type="journal article" date="2004" name="J. Biol. Chem.">
        <title>N-retinylidene-phosphatidylethanolamine is the preferred retinoid substrate for the photoreceptor-specific ABC transporter ABCA4 (ABCR).</title>
        <authorList>
            <person name="Beharry S."/>
            <person name="Zhong M."/>
            <person name="Molday R.S."/>
        </authorList>
    </citation>
    <scope>FUNCTION</scope>
</reference>
<reference key="9">
    <citation type="journal article" date="2010" name="Methods Mol. Biol.">
        <title>Binding of retinoids to ABCA4, the photoreceptor ABC transporter associated with Stargardt macular degeneration.</title>
        <authorList>
            <person name="Zhong M."/>
            <person name="Molday R.S."/>
        </authorList>
    </citation>
    <scope>FUNCTION</scope>
</reference>
<reference key="10">
    <citation type="journal article" date="2011" name="Biochemistry">
        <title>Posttranslational modifications of the photoreceptor-specific ABC transporter ABCA4.</title>
        <authorList>
            <person name="Tsybovsky Y."/>
            <person name="Wang B."/>
            <person name="Quazi F."/>
            <person name="Molday R.S."/>
            <person name="Palczewski K."/>
        </authorList>
    </citation>
    <scope>IDENTIFICATION BY MASS SPECTROMETRY</scope>
    <scope>GLYCOSYLATION AT ASN-415; ASN-504; ASN-1455; ASN-1527; ASN-1586 AND ASN-1660</scope>
    <scope>PHOSPHORYLATION AT THR-901; SER-1185; THR-1313; SER-1317 AND SER-1319</scope>
    <scope>MUTAGENESIS OF THR-901; SER-1185; THR-1313 AND SER-1317</scope>
    <scope>SUBCELLULAR LOCATION</scope>
</reference>
<reference key="11">
    <citation type="journal article" date="2012" name="Nat. Commun.">
        <title>ABCA4 is an N-retinylidene-phosphatidylethanolamine and phosphatidylethanolamine importer.</title>
        <authorList>
            <person name="Quazi F."/>
            <person name="Lenevich S."/>
            <person name="Molday R.S."/>
        </authorList>
    </citation>
    <scope>FUNCTION</scope>
    <scope>CATALYTIC ACTIVITY</scope>
    <scope>ACTIVITY REGULATION</scope>
    <scope>BIOPHYSICOCHEMICAL PROPERTIES</scope>
</reference>
<reference key="12">
    <citation type="journal article" date="2014" name="Proc. Natl. Acad. Sci. U.S.A.">
        <title>ATP-binding cassette transporter ABCA4 and chemical isomerization protect photoreceptor cells from the toxic accumulation of excess 11-cis-retinal.</title>
        <authorList>
            <person name="Quazi F."/>
            <person name="Molday R.S."/>
        </authorList>
    </citation>
    <scope>FUNCTION</scope>
    <scope>CATALYTIC ACTIVITY</scope>
</reference>
<sequence>MGFARQIKLLLWKNWTLRKRQKIRFVVELVWPLSLFLVLIWLRNVNPLYSKHECHFPNKAMPSAGMLPWLQGIFCNVNNPCFQSPTAGESPGIVSNYNNSILARVYRDFQELLMDAPESQHLGQVWRELRTLSQLMNTLRMHPERIAGRGIRIREVLKDDEMLTLFLVKNIGLSDSVVYLLVNSQVRPEQFARGVPDLMLKDIACSEALLERFLIFPQRRAAQTVRGSLCSLSQGTLQWMEDTLYANVDFFKLFHVFPRLLDSRSQGMNLRSWGRILSDMSPRIQEFIHRPSVQDLLWVTRPLVQTGGPETFTQLMGILSDLLCGYPEGGGSRVFSFNWYEDNNYKAFLGIDSTRKDPIYSYDERTTTFCNALIQSLESNPLTKIAWRAAKPLLMGKILFTPDSPATRRILKNANSTFEELERVRKLVKVWEEVGPQIWYFFDKSTQMSMIRDTLENPTVKAFWNRQLGEEGITAEAVLNFLYNGPREGQADDVDNFNWRDIFNITDRALRLANQYLECLILDKFESYDDEFQLTQRALSLLEENRFWAGVVFPDMHPWTSSLPPHVKYKIRMDIDVVEKTNKIKDRYWDSGPRADPVEDFRYIWGGFAYLQDMVEHGITRSQAQEEVPVGIYLQQMPYPCFVDDSFMIILNRCFPIFMVLAWIYSVSMTVKSIVLEKELRLKETLKNQGVSNRVIWCTWFLDSFSIMSMSICLLTIFIMHGRILHYSNPFILFLFLLAFSIATIMQCFLLSTFFSRASLAAACSGVIYFTLYLPHILCFAWQDRITADMKMAVSLLSPVAFGFGTEYLARFEEQGVGLQWSNIGNSPMEGDEFSFLMSMKMMLLDAALYGLLAWYLDQVFPGDYGTPLPWYFLLQESYWLGGEGCSTREERALEKTEPITEEMEDPEYPEGINDCFFERELPGLVPGVCVKNLVKIFEPYGRPAVDRLNITFYESQITAFLGHNGAGKTTTLSIMTGLLPPTSGTVLVGGKDIETNLDAIRQSLGMCPQHNILFHHLTVAEHILFYAQLKGRSWDKAQLEMEAMLEDTGLHHKRNEEAQDLSGGVQRKLSVAIAFVGDAKVVVLDEPTSGVDPYSRRSIWDLLLKYRSGRTIIMSTHHMDEADILGDRIAIISQGRLYCSGTPLFLKNCFGTGFYLTLVRRMKTIQSQGRGREATCSCASKGFSVRCPACAEAITPEQVLDGDVNELTDMVHHHVPEAKLVECIGQELIFLLPNKNFKQRAYASLFRELEETLADLGLSSFGISDTPLEEIFLKVTEDLDSGHLFAGGTQQKRENINLRHPCSGPSEKAGQTPQGSSSHPREPAAHPEGQPPPEREGHSRLNSGARLIVQHVQALLVKRFQHTIRSHKDFLAQIVLPATFVFLALMLSLIIPPFGEYPALTLHPWMYGQQYTFFSMDQLDSEWLSALADVLVNKPGFGNRCLKEEWLPEFPCGNSSPWKTPSVSPDVTHLLQQQKWTADQPSPSCRCSTREKLTMLPECPEGAGGLPPPQRIQRSTEILQDLTDRNVSDFLVKTYPALIRSSLKSKFWVNEQRYGGISVGGKLPAPPFTGEALVGFLSDLGQLMNVSGGPMTREAAKEMPAFLKQLETEDNIKVWFNNKGWHALVSFLNVAHNAILRASLHKDKNPEEYGITVISQPLNLTKEQLSEITVLTTSVDAVVAICVIFAMSFVPASFVLYLIQERVNKAKHLQFVSGVSPTTYWLTNFLWDIMNYTVSAALVVGIFIGFQKKAYTSSENLPALVALLMLYGWAVIPMMYPASFLFDIPSTAYVALSCANLFIGINSSAITFVLELFENNRTLLRINAMLRKLLIIFPHFCLGRGLIDLALSQAVTDVYARFGEEHSSNPFQWDLIGKNLAAMAVEGVVYFLLTLLIQYQFFFSRWTTEPAKEPITDEDDDVAEERQRIISGGNKTDILRLNELTKVYSGTSSPAVDRLCVGVRPGECFGLLGVNGAGKTTTFKMLTGDTAVTSGDATVAGKSILTNISDVHQSMGYCPQFDAIDDLLTGREHLYLYARLRGVPAEEIERVTNWSIQSLGLSLYADRLAGTYSGGNKRKLSTAIALIGCPPLVLLDEPTTGMDPQARRMLWNTIMGIIREGRAVVLTSHSMEECEALCTRLAIMVKGAFQCLGTIQHLKSKFGDGYIVTMKIRSPKDDLLPDLGPVEQFFQGNFPGSVQRERHYNMLQFQVSSSSLARIFRLLVSHKDSLLIEEYSVTQTTLDQVFVNFAKQQNETYDLPLHPRAAGASRQAKEVDKGNSAPQG</sequence>
<gene>
    <name evidence="1" type="primary">ABCA4</name>
    <name evidence="1" type="synonym">ABCR</name>
</gene>
<organism>
    <name type="scientific">Bos taurus</name>
    <name type="common">Bovine</name>
    <dbReference type="NCBI Taxonomy" id="9913"/>
    <lineage>
        <taxon>Eukaryota</taxon>
        <taxon>Metazoa</taxon>
        <taxon>Chordata</taxon>
        <taxon>Craniata</taxon>
        <taxon>Vertebrata</taxon>
        <taxon>Euteleostomi</taxon>
        <taxon>Mammalia</taxon>
        <taxon>Eutheria</taxon>
        <taxon>Laurasiatheria</taxon>
        <taxon>Artiodactyla</taxon>
        <taxon>Ruminantia</taxon>
        <taxon>Pecora</taxon>
        <taxon>Bovidae</taxon>
        <taxon>Bovinae</taxon>
        <taxon>Bos</taxon>
    </lineage>
</organism>
<protein>
    <recommendedName>
        <fullName evidence="1">Retinal-specific phospholipid-transporting ATPase ABCA4</fullName>
        <ecNumber evidence="1">7.6.2.1</ecNumber>
    </recommendedName>
    <alternativeName>
        <fullName>ATP-binding cassette sub-family A member 4</fullName>
    </alternativeName>
    <alternativeName>
        <fullName>RIM ABC transporter</fullName>
        <shortName evidence="17 18">RIM protein</shortName>
        <shortName evidence="17 18">RmP</shortName>
    </alternativeName>
    <alternativeName>
        <fullName>Retinal-specific ATP-binding cassette transporter</fullName>
    </alternativeName>
</protein>
<feature type="chain" id="PRO_0000453425" description="Retinal-specific phospholipid-transporting ATPase ABCA4">
    <location>
        <begin position="1"/>
        <end position="2281"/>
    </location>
</feature>
<feature type="topological domain" description="Cytoplasmic" evidence="19">
    <location>
        <begin position="1"/>
        <end position="24"/>
    </location>
</feature>
<feature type="transmembrane region" description="Helical" evidence="2">
    <location>
        <begin position="25"/>
        <end position="45"/>
    </location>
</feature>
<feature type="topological domain" description="Extracellular" evidence="1">
    <location>
        <begin position="46"/>
        <end position="646"/>
    </location>
</feature>
<feature type="transmembrane region" description="Helical" evidence="2">
    <location>
        <begin position="647"/>
        <end position="667"/>
    </location>
</feature>
<feature type="topological domain" description="Cytoplasmic" evidence="19">
    <location>
        <begin position="668"/>
        <end position="699"/>
    </location>
</feature>
<feature type="transmembrane region" description="Helical" evidence="2">
    <location>
        <begin position="700"/>
        <end position="720"/>
    </location>
</feature>
<feature type="topological domain" description="Extracellular" evidence="19">
    <location>
        <begin position="721"/>
        <end position="730"/>
    </location>
</feature>
<feature type="transmembrane region" description="Helical" evidence="2">
    <location>
        <begin position="731"/>
        <end position="751"/>
    </location>
</feature>
<feature type="topological domain" description="Cytoplasmic" evidence="19">
    <location>
        <begin position="752"/>
        <end position="759"/>
    </location>
</feature>
<feature type="transmembrane region" description="Helical" evidence="2">
    <location>
        <begin position="760"/>
        <end position="780"/>
    </location>
</feature>
<feature type="topological domain" description="Extracellular" evidence="19">
    <location>
        <begin position="781"/>
        <end position="835"/>
    </location>
</feature>
<feature type="transmembrane region" description="Helical" evidence="2">
    <location>
        <begin position="836"/>
        <end position="856"/>
    </location>
</feature>
<feature type="topological domain" description="Cytoplasmic" evidence="19">
    <location>
        <begin position="857"/>
        <end position="1374"/>
    </location>
</feature>
<feature type="transmembrane region" description="Helical" evidence="2">
    <location>
        <begin position="1375"/>
        <end position="1395"/>
    </location>
</feature>
<feature type="topological domain" description="Extracellular" evidence="1">
    <location>
        <begin position="1396"/>
        <end position="1679"/>
    </location>
</feature>
<feature type="transmembrane region" description="Helical" evidence="2">
    <location>
        <begin position="1680"/>
        <end position="1700"/>
    </location>
</feature>
<feature type="topological domain" description="Cytoplasmic" evidence="19">
    <location>
        <begin position="1701"/>
        <end position="1725"/>
    </location>
</feature>
<feature type="transmembrane region" description="Helical" evidence="2">
    <location>
        <begin position="1726"/>
        <end position="1746"/>
    </location>
</feature>
<feature type="topological domain" description="Extracellular" evidence="19">
    <location>
        <begin position="1747"/>
        <end position="1757"/>
    </location>
</feature>
<feature type="transmembrane region" description="Helical" evidence="2">
    <location>
        <begin position="1758"/>
        <end position="1778"/>
    </location>
</feature>
<feature type="topological domain" description="Cytoplasmic" evidence="19">
    <location>
        <begin position="1779"/>
        <end position="1790"/>
    </location>
</feature>
<feature type="transmembrane region" description="Helical" evidence="2">
    <location>
        <begin position="1791"/>
        <end position="1811"/>
    </location>
</feature>
<feature type="topological domain" description="Extracellular" evidence="19">
    <location>
        <begin position="1812"/>
        <end position="1829"/>
    </location>
</feature>
<feature type="transmembrane region" description="Helical" evidence="2">
    <location>
        <begin position="1830"/>
        <end position="1850"/>
    </location>
</feature>
<feature type="topological domain" description="Cytoplasmic" evidence="19">
    <location>
        <begin position="1851"/>
        <end position="1879"/>
    </location>
</feature>
<feature type="transmembrane region" description="Helical" evidence="2">
    <location>
        <begin position="1880"/>
        <end position="1900"/>
    </location>
</feature>
<feature type="topological domain" description="Extracellular" evidence="19">
    <location>
        <begin position="1901"/>
        <end position="2281"/>
    </location>
</feature>
<feature type="domain" description="ABC transporter 1" evidence="3">
    <location>
        <begin position="929"/>
        <end position="1160"/>
    </location>
</feature>
<feature type="domain" description="ABC transporter 2" evidence="3">
    <location>
        <begin position="1936"/>
        <end position="2168"/>
    </location>
</feature>
<feature type="region of interest" description="Disordered" evidence="5">
    <location>
        <begin position="1295"/>
        <end position="1340"/>
    </location>
</feature>
<feature type="region of interest" description="Essential for ATP binding and ATPase activity" evidence="1">
    <location>
        <begin position="2242"/>
        <end position="2247"/>
    </location>
</feature>
<feature type="region of interest" description="Disordered" evidence="5">
    <location>
        <begin position="2262"/>
        <end position="2281"/>
    </location>
</feature>
<feature type="compositionally biased region" description="Polar residues" evidence="5">
    <location>
        <begin position="1310"/>
        <end position="1319"/>
    </location>
</feature>
<feature type="binding site" evidence="1">
    <location>
        <position position="336"/>
    </location>
    <ligand>
        <name>Mg(2+)</name>
        <dbReference type="ChEBI" id="CHEBI:18420"/>
        <label>1</label>
        <note>in protein in complex with N-all-trans-retinylidenephosphatidylethanolamine</note>
    </ligand>
</feature>
<feature type="binding site" evidence="1">
    <location>
        <position position="338"/>
    </location>
    <ligand>
        <name>Mg(2+)</name>
        <dbReference type="ChEBI" id="CHEBI:18420"/>
        <label>1</label>
        <note>in protein in complex with N-all-trans-retinylidenephosphatidylethanolamine</note>
    </ligand>
</feature>
<feature type="binding site" evidence="1">
    <location>
        <position position="587"/>
    </location>
    <ligand>
        <name>an N-all-trans-retinylidenephosphatidylethanolamine</name>
        <dbReference type="ChEBI" id="CHEBI:167884"/>
    </ligand>
</feature>
<feature type="binding site" evidence="1">
    <location>
        <position position="653"/>
    </location>
    <ligand>
        <name>an N-all-trans-retinylidenephosphatidylethanolamine</name>
        <dbReference type="ChEBI" id="CHEBI:167884"/>
    </ligand>
</feature>
<feature type="binding site" evidence="1">
    <location>
        <position position="938"/>
    </location>
    <ligand>
        <name>ATP</name>
        <dbReference type="ChEBI" id="CHEBI:30616"/>
        <label>1</label>
    </ligand>
</feature>
<feature type="binding site" evidence="1">
    <location>
        <position position="966"/>
    </location>
    <ligand>
        <name>ATP</name>
        <dbReference type="ChEBI" id="CHEBI:30616"/>
        <label>1</label>
    </ligand>
</feature>
<feature type="binding site" evidence="1">
    <location>
        <position position="969"/>
    </location>
    <ligand>
        <name>ATP</name>
        <dbReference type="ChEBI" id="CHEBI:30616"/>
        <label>1</label>
    </ligand>
</feature>
<feature type="binding site" evidence="1">
    <location>
        <position position="970"/>
    </location>
    <ligand>
        <name>Mg(2+)</name>
        <dbReference type="ChEBI" id="CHEBI:18420"/>
        <label>2</label>
        <note>in ATP-bound protein</note>
    </ligand>
</feature>
<feature type="binding site" evidence="1">
    <location>
        <position position="971"/>
    </location>
    <ligand>
        <name>ATP</name>
        <dbReference type="ChEBI" id="CHEBI:30616"/>
        <label>1</label>
    </ligand>
</feature>
<feature type="binding site" evidence="1">
    <location>
        <position position="1010"/>
    </location>
    <ligand>
        <name>ATP</name>
        <dbReference type="ChEBI" id="CHEBI:30616"/>
        <label>1</label>
    </ligand>
</feature>
<feature type="binding site" evidence="1">
    <location>
        <position position="1054"/>
    </location>
    <ligand>
        <name>ATP</name>
        <dbReference type="ChEBI" id="CHEBI:30616"/>
        <label>2</label>
    </ligand>
</feature>
<feature type="binding site" evidence="1">
    <location>
        <position position="1064"/>
    </location>
    <ligand>
        <name>ATP</name>
        <dbReference type="ChEBI" id="CHEBI:30616"/>
        <label>2</label>
    </ligand>
</feature>
<feature type="binding site" evidence="1">
    <location>
        <position position="1065"/>
    </location>
    <ligand>
        <name>ATP</name>
        <dbReference type="ChEBI" id="CHEBI:30616"/>
        <label>2</label>
    </ligand>
</feature>
<feature type="binding site" evidence="1">
    <location>
        <position position="1118"/>
    </location>
    <ligand>
        <name>ATP</name>
        <dbReference type="ChEBI" id="CHEBI:30616"/>
        <label>1</label>
    </ligand>
</feature>
<feature type="binding site" evidence="1">
    <location>
        <position position="1972"/>
    </location>
    <ligand>
        <name>ATP</name>
        <dbReference type="ChEBI" id="CHEBI:30616"/>
        <label>2</label>
    </ligand>
</feature>
<feature type="binding site" evidence="1">
    <location>
        <position position="1973"/>
    </location>
    <ligand>
        <name>ATP</name>
        <dbReference type="ChEBI" id="CHEBI:30616"/>
        <label>2</label>
    </ligand>
</feature>
<feature type="binding site" evidence="1">
    <location>
        <position position="1976"/>
    </location>
    <ligand>
        <name>ATP</name>
        <dbReference type="ChEBI" id="CHEBI:30616"/>
        <label>2</label>
    </ligand>
</feature>
<feature type="binding site" evidence="1">
    <location>
        <position position="1977"/>
    </location>
    <ligand>
        <name>ATP</name>
        <dbReference type="ChEBI" id="CHEBI:30616"/>
        <label>2</label>
    </ligand>
</feature>
<feature type="binding site" evidence="1">
    <location>
        <position position="1977"/>
    </location>
    <ligand>
        <name>Mg(2+)</name>
        <dbReference type="ChEBI" id="CHEBI:18420"/>
        <label>3</label>
        <note>in ATP-bound protein</note>
    </ligand>
</feature>
<feature type="binding site" evidence="1">
    <location>
        <position position="1978"/>
    </location>
    <ligand>
        <name>ATP</name>
        <dbReference type="ChEBI" id="CHEBI:30616"/>
        <label>2</label>
    </ligand>
</feature>
<feature type="binding site" evidence="1">
    <location>
        <position position="2071"/>
    </location>
    <ligand>
        <name>ATP</name>
        <dbReference type="ChEBI" id="CHEBI:30616"/>
        <label>1</label>
    </ligand>
</feature>
<feature type="site" description="Cleavage; by trypsin" evidence="14">
    <location>
        <position position="1309"/>
    </location>
</feature>
<feature type="modified residue" description="Phosphothreonine" evidence="11">
    <location>
        <position position="901"/>
    </location>
</feature>
<feature type="modified residue" description="Phosphoserine" evidence="11">
    <location>
        <position position="1185"/>
    </location>
</feature>
<feature type="modified residue" description="Phosphothreonine" evidence="11">
    <location>
        <position position="1313"/>
    </location>
</feature>
<feature type="modified residue" description="Phosphoserine" evidence="11">
    <location>
        <position position="1317"/>
    </location>
</feature>
<feature type="modified residue" description="Phosphoserine" evidence="11">
    <location>
        <position position="1319"/>
    </location>
</feature>
<feature type="glycosylation site" description="N-linked (GlcNAc...) asparagine" evidence="4">
    <location>
        <position position="98"/>
    </location>
</feature>
<feature type="glycosylation site" description="N-linked (Hex...) asparagine" evidence="4 11">
    <location>
        <position position="415"/>
    </location>
</feature>
<feature type="glycosylation site" description="N-linked (Hex...) asparagine" evidence="4 11">
    <location>
        <position position="504"/>
    </location>
</feature>
<feature type="glycosylation site" description="N-linked (Hex...) asparagine" evidence="11">
    <location>
        <position position="1455"/>
    </location>
</feature>
<feature type="glycosylation site" description="N-linked (Hex...) asparagine" evidence="4 11">
    <location>
        <position position="1527"/>
    </location>
</feature>
<feature type="glycosylation site" description="N-linked (GlcNAc...) asparagine" evidence="4">
    <location>
        <position position="1586"/>
    </location>
</feature>
<feature type="glycosylation site" description="N-linked (Hex...) asparagine" evidence="4 11">
    <location>
        <position position="1660"/>
    </location>
</feature>
<feature type="glycosylation site" description="N-linked (GlcNAc...) asparagine" evidence="4">
    <location>
        <position position="1817"/>
    </location>
</feature>
<feature type="glycosylation site" description="N-linked (GlcNAc...) asparagine" evidence="4">
    <location>
        <position position="1931"/>
    </location>
</feature>
<feature type="glycosylation site" description="N-linked (GlcNAc...) asparagine" evidence="4">
    <location>
        <position position="2004"/>
    </location>
</feature>
<feature type="glycosylation site" description="N-linked (GlcNAc...) asparagine" evidence="4">
    <location>
        <position position="2050"/>
    </location>
</feature>
<feature type="glycosylation site" description="N-linked (GlcNAc...) asparagine" evidence="4">
    <location>
        <position position="2251"/>
    </location>
</feature>
<feature type="disulfide bond" evidence="1">
    <location>
        <begin position="54"/>
        <end position="81"/>
    </location>
</feature>
<feature type="disulfide bond" evidence="1">
    <location>
        <begin position="75"/>
        <end position="324"/>
    </location>
</feature>
<feature type="disulfide bond" evidence="1">
    <location>
        <begin position="370"/>
        <end position="519"/>
    </location>
</feature>
<feature type="disulfide bond" description="Interchain" evidence="1">
    <location>
        <begin position="641"/>
        <end position="1488"/>
    </location>
</feature>
<feature type="disulfide bond" evidence="1">
    <location>
        <begin position="1442"/>
        <end position="1453"/>
    </location>
</feature>
<feature type="disulfide bond" evidence="1">
    <location>
        <begin position="1486"/>
        <end position="1500"/>
    </location>
</feature>
<feature type="mutagenesis site" description="Decreases expression level. Affects subcellular location." evidence="11">
    <original>T</original>
    <variation>A</variation>
    <location>
        <position position="901"/>
    </location>
</feature>
<feature type="mutagenesis site" description="Does not affect subcellular location. Does not affect expression level. Does not affect ATPase activity. Reduces the stimulating effect of all-trans-retinal on ATP hydrolysis." evidence="11">
    <original>S</original>
    <variation>A</variation>
    <location>
        <position position="1185"/>
    </location>
</feature>
<feature type="mutagenesis site" description="Does not affect subcellular location. Does not affect expression level. Does not affect ATPase activity. Reduces the stimulating effect of all-trans-retinal on ATP hydrolysis." evidence="11">
    <original>T</original>
    <variation>A</variation>
    <location>
        <position position="1313"/>
    </location>
</feature>
<feature type="mutagenesis site" description="Does not affect subcellular location. Does not affect expression level. Affects both the basal and stimulated ATPase activity." evidence="11">
    <original>S</original>
    <variation>A</variation>
    <location>
        <position position="1317"/>
    </location>
</feature>
<feature type="sequence conflict" description="In Ref. 1; AAC48716." evidence="19" ref="1">
    <original>K</original>
    <variation>E</variation>
    <location>
        <position position="1037"/>
    </location>
</feature>
<feature type="sequence conflict" description="In Ref. 1; AAC48716." evidence="19" ref="1">
    <original>Q</original>
    <variation>R</variation>
    <location>
        <position position="1060"/>
    </location>
</feature>
<feature type="sequence conflict" description="In Ref. 1; AAC48716." evidence="19" ref="1">
    <original>R</original>
    <variation>G</variation>
    <location>
        <position position="1322"/>
    </location>
</feature>
<feature type="sequence conflict" description="In Ref. 1; AAC48716." evidence="19" ref="1">
    <original>L</original>
    <variation>P</variation>
    <location>
        <position position="1420"/>
    </location>
</feature>
<feature type="sequence conflict" description="In Ref. 1; AAC48716." evidence="19" ref="1">
    <original>RFGEE</original>
    <variation>QFGEA</variation>
    <location>
        <begin position="1858"/>
        <end position="1862"/>
    </location>
</feature>
<feature type="sequence conflict" description="In Ref. 1; AAC48716." evidence="19" ref="1">
    <original>G</original>
    <variation>E</variation>
    <location>
        <position position="2118"/>
    </location>
</feature>
<feature type="sequence conflict" description="In Ref. 1; AAC48716." evidence="19" ref="1">
    <original>M</original>
    <variation>T</variation>
    <location>
        <position position="2203"/>
    </location>
</feature>
<feature type="sequence conflict" description="In Ref. 1; AAC48716." evidence="19" ref="1">
    <original>A</original>
    <variation>T</variation>
    <location>
        <position position="2262"/>
    </location>
</feature>
<comment type="function">
    <text evidence="6 7 9 10 12 13">Flippase that catalyzes in an ATP-dependent manner the transport of retinal-phosphatidylethanolamine conjugates like the 11-cis and all-trans isomers of N-retinylidene-phosphatidylethanolamine from the lumen to the cytoplasmic leaflet of photoreceptor outer segment disk membranes, where N-cis-retinylidene-phosphatidylethanolamine (N-cis-R-PE) is then isomerized to its all-trans isomer (N-trans-R-PE) and reduced by RDH8 to produce all-trans-retinol (all-trans-rol) and therefore prevents the accumulation of excess of 11-cis-retinal and its schiff-base conjugate and the formation of toxic bisretinoid (PubMed:10075733, PubMed:10767284, PubMed:20552428, PubMed:22735453, PubMed:24707049). Displays both ATPase and GTPase activity that is strongly influenced by the lipid environment and the presence of retinoid compounds (PubMed:10767284). Binds the unprotonated form of N-retinylidene-phosphatidylethanolamine with high affinity in the absence of ATP and ATP binding and hydrolysis induce a protein conformational change that causes the dissociation of N-retinylidene-phosphatidylethanolamine (PubMed:15471866, PubMed:20552428, PubMed:22735453).</text>
</comment>
<comment type="catalytic activity">
    <reaction evidence="12">
        <text>ATP + H2O + phospholipidSide 1 = ADP + phosphate + phospholipidSide 2.</text>
        <dbReference type="EC" id="7.6.2.1"/>
    </reaction>
</comment>
<comment type="catalytic activity">
    <reaction evidence="12 13">
        <text>an N-all-trans-retinylidenephosphatidylethanolamine(out) + ATP + H2O = an N-all-trans-retinylidenephosphatidylethanolamine(in) + ADP + phosphate + H(+)</text>
        <dbReference type="Rhea" id="RHEA:67188"/>
        <dbReference type="ChEBI" id="CHEBI:15377"/>
        <dbReference type="ChEBI" id="CHEBI:15378"/>
        <dbReference type="ChEBI" id="CHEBI:30616"/>
        <dbReference type="ChEBI" id="CHEBI:43474"/>
        <dbReference type="ChEBI" id="CHEBI:167884"/>
        <dbReference type="ChEBI" id="CHEBI:456216"/>
    </reaction>
    <physiologicalReaction direction="left-to-right" evidence="20">
        <dbReference type="Rhea" id="RHEA:67189"/>
    </physiologicalReaction>
</comment>
<comment type="catalytic activity">
    <reaction evidence="12">
        <text>a 1,2-diacyl-sn-glycero-3-phosphoethanolamine(out) + ATP + H2O = a 1,2-diacyl-sn-glycero-3-phosphoethanolamine(in) + ADP + phosphate + H(+)</text>
        <dbReference type="Rhea" id="RHEA:66132"/>
        <dbReference type="ChEBI" id="CHEBI:15377"/>
        <dbReference type="ChEBI" id="CHEBI:15378"/>
        <dbReference type="ChEBI" id="CHEBI:30616"/>
        <dbReference type="ChEBI" id="CHEBI:43474"/>
        <dbReference type="ChEBI" id="CHEBI:64612"/>
        <dbReference type="ChEBI" id="CHEBI:456216"/>
    </reaction>
    <physiologicalReaction direction="left-to-right" evidence="20">
        <dbReference type="Rhea" id="RHEA:66133"/>
    </physiologicalReaction>
</comment>
<comment type="catalytic activity">
    <reaction evidence="13">
        <text>N-11-cis-retinylidenephosphatidylethanolamine(out) + ATP + H2O = N-11-cis-retinylidenephosphatidylethanolamine(in) + ADP + phosphate + H(+)</text>
        <dbReference type="Rhea" id="RHEA:67192"/>
        <dbReference type="ChEBI" id="CHEBI:15377"/>
        <dbReference type="ChEBI" id="CHEBI:15378"/>
        <dbReference type="ChEBI" id="CHEBI:30616"/>
        <dbReference type="ChEBI" id="CHEBI:43474"/>
        <dbReference type="ChEBI" id="CHEBI:167887"/>
        <dbReference type="ChEBI" id="CHEBI:456216"/>
    </reaction>
    <physiologicalReaction direction="left-to-right" evidence="21">
        <dbReference type="Rhea" id="RHEA:67193"/>
    </physiologicalReaction>
</comment>
<comment type="catalytic activity">
    <reaction evidence="1">
        <text>ATP + H2O = ADP + phosphate + H(+)</text>
        <dbReference type="Rhea" id="RHEA:13065"/>
        <dbReference type="ChEBI" id="CHEBI:15377"/>
        <dbReference type="ChEBI" id="CHEBI:15378"/>
        <dbReference type="ChEBI" id="CHEBI:30616"/>
        <dbReference type="ChEBI" id="CHEBI:43474"/>
        <dbReference type="ChEBI" id="CHEBI:456216"/>
    </reaction>
</comment>
<comment type="activity regulation">
    <text evidence="12">All-trans-retinal transport activity is reduced by EDTA chelation of Mg2+ (PubMed:22735453). All-trans-retinal transport activity is inhibited by N-ethylmaleimide (NEM) (PubMed:22735453). Phosphatidylethanolamine transport is strongly inhibited by beryllium fluoride and NEM (PubMed:22735453).</text>
</comment>
<comment type="biophysicochemical properties">
    <kinetics>
        <KM evidence="6">278 uM for ATP (with a purified ABCA4)</KM>
        <KM evidence="6">33 uM for ATP (with ABCA4 reconstituted into brain lipid membrane)</KM>
        <KM evidence="6">725 uM for ATP (reconstituted into brain lipid membrane, plus 80 uM all-trans-retinal)</KM>
        <KM evidence="6">18 uM for ATP (with amiodarone)</KM>
        <KM evidence="6">400 uM for ATP (with all-trans-retinal)</KM>
        <KM evidence="6">666 uM for ATP (with all-trans-retinal plus amiodarone)</KM>
        <KM evidence="7">75 uM for ATP (with CHAPS-solubilized ABCA4)</KM>
        <KM evidence="7">32 uM for ATP (with ABCA4 reconstituted into soybean phospholipid)</KM>
        <KM evidence="7">20 uM for ATP (with ABCA4 reconstituted into brain polar lipid)</KM>
        <KM evidence="7">25 uM for ATP (with ABCA4 reconstituted into ROS phospholipid)</KM>
        <KM evidence="7">112 uM for ATP (with CHAPS-solubilized ABCA4 and 60 uM all-trans-retinal)</KM>
        <KM evidence="7">56 uM for ATP (with ABCA4 reconstituted into soybean phospholipid and 60 uM all-trans-retinal)</KM>
        <KM evidence="7">106 uM for ATP (with ABCA4 reconstituted into brain polar lipid and 60 uM all-trans-retinal)</KM>
        <KM evidence="7">75 uM for ATP (with ABCA4 reconstituted into ROS phospholipid and 60 uM all-trans-retinal)</KM>
        <KM evidence="13">0.02 mM for ATP (in the presence of 40 uM retinal)</KM>
        <Vmax evidence="6">27.0 nmol/min/mg enzyme (for ATP hydrolysis and with a purified ABCA4)</Vmax>
        <Vmax evidence="6">1.3 nmol/min/mg enzyme (for ATP hydrolysis and with ABCA4 reconstituted into brain lipid membrane)</Vmax>
        <Vmax evidence="6">29.0 nmol/min/mg enzyme (for ATP hydrolysis and with ABCA4 reconstituted into brain lipid membrane, plus 80 uM all-trans-retinal)</Vmax>
        <Vmax evidence="6">2.0 nmol/min/mg enzyme (for ATP hydrolysis and with amiodarone as substrate)</Vmax>
        <Vmax evidence="6">20.0 nmol/min/mg enzyme (for ATP hydrolysis and with all-trans-retinal as substrate)</Vmax>
        <Vmax evidence="6">50.0 nmol/min/mg enzyme (for ATP hydrolysis and with all-trans-retinal and amiodarone as substrates)</Vmax>
        <Vmax evidence="7">190.0 nmol/min/mg enzyme (for ATP hydrolysis and with CHAPS-solubilized ABCA4)</Vmax>
        <Vmax evidence="7">50.0 nmol/min/mg enzyme (for ATP hydrolysis and with ABCA4 reconstituted into soybean phospholipid)</Vmax>
        <Vmax evidence="7">29.0 nmol/min/mg enzyme (for ATP hydrolysis and with ABCA4 reconstituted into brain polar lipid)</Vmax>
        <Vmax evidence="7">202.0 nmol/min/mg enzyme (for ATP hydrolysis and with ABCA4 reconstituted into ROS phospholipid)</Vmax>
        <Vmax evidence="7">402.0 nmol/min/mg enzyme (for ATP hydrolysis and with CHAPS-solubilized ABCA4 and 60 uM all-trans-retinal)</Vmax>
        <Vmax evidence="7">110.0 nmol/min/mg enzyme (for ATP hydrolysis and with ABCA4 reconstituted into soybean phospholipid and 60 uM all-trans-retinal)</Vmax>
        <Vmax evidence="7">171.0 nmol/min/mg enzyme (for ATP hydrolysis and with ABCA4 reconstituted into brain polar lipid and 60 uM all-trans-retinal)</Vmax>
        <Vmax evidence="7">673.0 nmol/min/mg enzyme (for ATP hydrolysis and with ABCA4 reconstituted into ROS phospholipid and 60 uM all-trans-retinal)</Vmax>
        <Vmax evidence="12">35.5 pmol/min/ug enzyme toward all-trans-retinal (in liposome)</Vmax>
        <Vmax evidence="12">4.9 nmol/min/mg enzyme towards all-trans-retinal (in rod outer segments)</Vmax>
    </kinetics>
    <phDependence>
        <text evidence="12">Optimum pH is 8.</text>
    </phDependence>
</comment>
<comment type="interaction">
    <interactant intactId="EBI-7079806">
        <id>F1MWM0</id>
    </interactant>
    <interactant intactId="EBI-6979031">
        <id>Q28181</id>
        <label>CNGB1</label>
    </interactant>
    <organismsDiffer>false</organismsDiffer>
    <experiments>3</experiments>
</comment>
<comment type="subcellular location">
    <subcellularLocation>
        <location evidence="2">Membrane</location>
        <topology evidence="2">Multi-pass membrane protein</topology>
    </subcellularLocation>
    <subcellularLocation>
        <location evidence="14 15 16">Cell projection</location>
        <location evidence="14 15 16">Cilium</location>
        <location evidence="14 15 16">Photoreceptor outer segment</location>
    </subcellularLocation>
    <subcellularLocation>
        <location evidence="11">Cytoplasmic vesicle</location>
    </subcellularLocation>
    <subcellularLocation>
        <location evidence="1">Endoplasmic reticulum</location>
    </subcellularLocation>
    <text evidence="14 16">Localized to the rim and incisures of rod outer segments disks.</text>
</comment>
<comment type="tissue specificity">
    <text evidence="14 15">Expressed in retina namely in the periphery and incisures of the rod outer segments (ROS).</text>
</comment>
<comment type="domain">
    <text evidence="1">The second extracellular domain (ECD2, aa 1395-1680) undergoes conformational change in response to its specific interaction with its substrate all-trans-retinal. Nucleotide binding domain 1 (NBD1, aa 854-1375) binds preferentially and with high affinity with the 11-cis retinal.</text>
</comment>
<comment type="PTM">
    <text evidence="8 14 15">N-glycosylated.</text>
</comment>
<comment type="PTM">
    <text evidence="8 14">Proteolytic cleavage by trypsin leads to a 120-kDa N-terminal fragment and a 115-kDa C-terminal fragment that are linked through disulfide bonds.</text>
</comment>
<comment type="PTM">
    <text evidence="11">Phosphorylation is independent of light exposure and modulates ATPase activity.</text>
</comment>